<protein>
    <recommendedName>
        <fullName>Thioredoxin-like 1-1, chloroplastic</fullName>
    </recommendedName>
    <alternativeName>
        <fullName>Atypical cysteine/histidine-rich thioredoxin 4</fullName>
        <shortName>AtACHT4</shortName>
    </alternativeName>
    <alternativeName>
        <fullName>Lilium-type thioredoxin 1-1</fullName>
    </alternativeName>
</protein>
<gene>
    <name type="ordered locus">At1g08570</name>
    <name type="ORF">F22O13.5</name>
</gene>
<evidence type="ECO:0000255" key="1"/>
<evidence type="ECO:0000255" key="2">
    <source>
        <dbReference type="PROSITE-ProRule" id="PRU00691"/>
    </source>
</evidence>
<evidence type="ECO:0000256" key="3">
    <source>
        <dbReference type="SAM" id="MobiDB-lite"/>
    </source>
</evidence>
<evidence type="ECO:0000269" key="4">
    <source>
    </source>
</evidence>
<evidence type="ECO:0000303" key="5">
    <source>
    </source>
</evidence>
<evidence type="ECO:0000305" key="6"/>
<sequence>MTEVISKTSLFLGACGNHHRVDDFSFSPVSFGGFGLKKSFSCLKLKSQKPLRSVFYGKQIVFGDSQDESFRRSSAITAQTTLRIGTAQKWWEKGLKDNMREISSAQELVDSLTNAGDKLVVVDFFSPGCGGCKALHPKICQFAEMNPDVQFLQVNYEEHKSMCYSLGVHVLPFFRFYRGSQGRVCSFSCTNATIKKFRDALAKHGPDRCSLGPTKGLEEKELVALAANKELNFTYTPKPVPVEKEAATPDSNPSLPVPLPSMSSNDEKTLVSAGR</sequence>
<organism>
    <name type="scientific">Arabidopsis thaliana</name>
    <name type="common">Mouse-ear cress</name>
    <dbReference type="NCBI Taxonomy" id="3702"/>
    <lineage>
        <taxon>Eukaryota</taxon>
        <taxon>Viridiplantae</taxon>
        <taxon>Streptophyta</taxon>
        <taxon>Embryophyta</taxon>
        <taxon>Tracheophyta</taxon>
        <taxon>Spermatophyta</taxon>
        <taxon>Magnoliopsida</taxon>
        <taxon>eudicotyledons</taxon>
        <taxon>Gunneridae</taxon>
        <taxon>Pentapetalae</taxon>
        <taxon>rosids</taxon>
        <taxon>malvids</taxon>
        <taxon>Brassicales</taxon>
        <taxon>Brassicaceae</taxon>
        <taxon>Camelineae</taxon>
        <taxon>Arabidopsis</taxon>
    </lineage>
</organism>
<comment type="function">
    <text evidence="4">Thiol-disulfide oxidoreductase that may participate in various redox reactions. Possesses insulin disulfide bonds reducing activity.</text>
</comment>
<comment type="subcellular location">
    <subcellularLocation>
        <location evidence="4">Plastid</location>
        <location evidence="4">Chloroplast</location>
    </subcellularLocation>
</comment>
<comment type="alternative products">
    <event type="alternative splicing"/>
    <isoform>
        <id>O64654-1</id>
        <name>1</name>
        <sequence type="displayed"/>
    </isoform>
    <isoform>
        <id>O64654-2</id>
        <name>2</name>
        <sequence type="described" ref="VSP_039283"/>
    </isoform>
</comment>
<comment type="similarity">
    <text evidence="6">Belongs to the thioredoxin family.</text>
</comment>
<comment type="caution">
    <text evidence="6">The active site contains a CGGC motif which differs from the conserved CGPC motif.</text>
</comment>
<reference key="1">
    <citation type="journal article" date="1999" name="Trends Plant Sci.">
        <title>Plant thioredoxins and glutaredoxins: identity and putative roles.</title>
        <authorList>
            <person name="Meyer Y."/>
            <person name="Verdoucq L."/>
            <person name="Vignols F."/>
        </authorList>
    </citation>
    <scope>NUCLEOTIDE SEQUENCE [MRNA] (ISOFORM 1)</scope>
</reference>
<reference key="2">
    <citation type="journal article" date="2000" name="Nature">
        <title>Sequence and analysis of chromosome 1 of the plant Arabidopsis thaliana.</title>
        <authorList>
            <person name="Theologis A."/>
            <person name="Ecker J.R."/>
            <person name="Palm C.J."/>
            <person name="Federspiel N.A."/>
            <person name="Kaul S."/>
            <person name="White O."/>
            <person name="Alonso J."/>
            <person name="Altafi H."/>
            <person name="Araujo R."/>
            <person name="Bowman C.L."/>
            <person name="Brooks S.Y."/>
            <person name="Buehler E."/>
            <person name="Chan A."/>
            <person name="Chao Q."/>
            <person name="Chen H."/>
            <person name="Cheuk R.F."/>
            <person name="Chin C.W."/>
            <person name="Chung M.K."/>
            <person name="Conn L."/>
            <person name="Conway A.B."/>
            <person name="Conway A.R."/>
            <person name="Creasy T.H."/>
            <person name="Dewar K."/>
            <person name="Dunn P."/>
            <person name="Etgu P."/>
            <person name="Feldblyum T.V."/>
            <person name="Feng J.-D."/>
            <person name="Fong B."/>
            <person name="Fujii C.Y."/>
            <person name="Gill J.E."/>
            <person name="Goldsmith A.D."/>
            <person name="Haas B."/>
            <person name="Hansen N.F."/>
            <person name="Hughes B."/>
            <person name="Huizar L."/>
            <person name="Hunter J.L."/>
            <person name="Jenkins J."/>
            <person name="Johnson-Hopson C."/>
            <person name="Khan S."/>
            <person name="Khaykin E."/>
            <person name="Kim C.J."/>
            <person name="Koo H.L."/>
            <person name="Kremenetskaia I."/>
            <person name="Kurtz D.B."/>
            <person name="Kwan A."/>
            <person name="Lam B."/>
            <person name="Langin-Hooper S."/>
            <person name="Lee A."/>
            <person name="Lee J.M."/>
            <person name="Lenz C.A."/>
            <person name="Li J.H."/>
            <person name="Li Y.-P."/>
            <person name="Lin X."/>
            <person name="Liu S.X."/>
            <person name="Liu Z.A."/>
            <person name="Luros J.S."/>
            <person name="Maiti R."/>
            <person name="Marziali A."/>
            <person name="Militscher J."/>
            <person name="Miranda M."/>
            <person name="Nguyen M."/>
            <person name="Nierman W.C."/>
            <person name="Osborne B.I."/>
            <person name="Pai G."/>
            <person name="Peterson J."/>
            <person name="Pham P.K."/>
            <person name="Rizzo M."/>
            <person name="Rooney T."/>
            <person name="Rowley D."/>
            <person name="Sakano H."/>
            <person name="Salzberg S.L."/>
            <person name="Schwartz J.R."/>
            <person name="Shinn P."/>
            <person name="Southwick A.M."/>
            <person name="Sun H."/>
            <person name="Tallon L.J."/>
            <person name="Tambunga G."/>
            <person name="Toriumi M.J."/>
            <person name="Town C.D."/>
            <person name="Utterback T."/>
            <person name="Van Aken S."/>
            <person name="Vaysberg M."/>
            <person name="Vysotskaia V.S."/>
            <person name="Walker M."/>
            <person name="Wu D."/>
            <person name="Yu G."/>
            <person name="Fraser C.M."/>
            <person name="Venter J.C."/>
            <person name="Davis R.W."/>
        </authorList>
    </citation>
    <scope>NUCLEOTIDE SEQUENCE [LARGE SCALE GENOMIC DNA]</scope>
    <source>
        <strain>cv. Columbia</strain>
    </source>
</reference>
<reference key="3">
    <citation type="journal article" date="2017" name="Plant J.">
        <title>Araport11: a complete reannotation of the Arabidopsis thaliana reference genome.</title>
        <authorList>
            <person name="Cheng C.Y."/>
            <person name="Krishnakumar V."/>
            <person name="Chan A.P."/>
            <person name="Thibaud-Nissen F."/>
            <person name="Schobel S."/>
            <person name="Town C.D."/>
        </authorList>
    </citation>
    <scope>GENOME REANNOTATION</scope>
    <source>
        <strain>cv. Columbia</strain>
    </source>
</reference>
<reference key="4">
    <citation type="journal article" date="2003" name="Science">
        <title>Empirical analysis of transcriptional activity in the Arabidopsis genome.</title>
        <authorList>
            <person name="Yamada K."/>
            <person name="Lim J."/>
            <person name="Dale J.M."/>
            <person name="Chen H."/>
            <person name="Shinn P."/>
            <person name="Palm C.J."/>
            <person name="Southwick A.M."/>
            <person name="Wu H.C."/>
            <person name="Kim C.J."/>
            <person name="Nguyen M."/>
            <person name="Pham P.K."/>
            <person name="Cheuk R.F."/>
            <person name="Karlin-Newmann G."/>
            <person name="Liu S.X."/>
            <person name="Lam B."/>
            <person name="Sakano H."/>
            <person name="Wu T."/>
            <person name="Yu G."/>
            <person name="Miranda M."/>
            <person name="Quach H.L."/>
            <person name="Tripp M."/>
            <person name="Chang C.H."/>
            <person name="Lee J.M."/>
            <person name="Toriumi M.J."/>
            <person name="Chan M.M."/>
            <person name="Tang C.C."/>
            <person name="Onodera C.S."/>
            <person name="Deng J.M."/>
            <person name="Akiyama K."/>
            <person name="Ansari Y."/>
            <person name="Arakawa T."/>
            <person name="Banh J."/>
            <person name="Banno F."/>
            <person name="Bowser L."/>
            <person name="Brooks S.Y."/>
            <person name="Carninci P."/>
            <person name="Chao Q."/>
            <person name="Choy N."/>
            <person name="Enju A."/>
            <person name="Goldsmith A.D."/>
            <person name="Gurjal M."/>
            <person name="Hansen N.F."/>
            <person name="Hayashizaki Y."/>
            <person name="Johnson-Hopson C."/>
            <person name="Hsuan V.W."/>
            <person name="Iida K."/>
            <person name="Karnes M."/>
            <person name="Khan S."/>
            <person name="Koesema E."/>
            <person name="Ishida J."/>
            <person name="Jiang P.X."/>
            <person name="Jones T."/>
            <person name="Kawai J."/>
            <person name="Kamiya A."/>
            <person name="Meyers C."/>
            <person name="Nakajima M."/>
            <person name="Narusaka M."/>
            <person name="Seki M."/>
            <person name="Sakurai T."/>
            <person name="Satou M."/>
            <person name="Tamse R."/>
            <person name="Vaysberg M."/>
            <person name="Wallender E.K."/>
            <person name="Wong C."/>
            <person name="Yamamura Y."/>
            <person name="Yuan S."/>
            <person name="Shinozaki K."/>
            <person name="Davis R.W."/>
            <person name="Theologis A."/>
            <person name="Ecker J.R."/>
        </authorList>
    </citation>
    <scope>NUCLEOTIDE SEQUENCE [LARGE SCALE MRNA] (ISOFORM 1)</scope>
    <source>
        <strain>cv. Columbia</strain>
    </source>
</reference>
<reference key="5">
    <citation type="journal article" date="2009" name="DNA Res.">
        <title>Analysis of multiple occurrences of alternative splicing events in Arabidopsis thaliana using novel sequenced full-length cDNAs.</title>
        <authorList>
            <person name="Iida K."/>
            <person name="Fukami-Kobayashi K."/>
            <person name="Toyoda A."/>
            <person name="Sakaki Y."/>
            <person name="Kobayashi M."/>
            <person name="Seki M."/>
            <person name="Shinozaki K."/>
        </authorList>
    </citation>
    <scope>NUCLEOTIDE SEQUENCE [LARGE SCALE MRNA] (ISOFORM 2)</scope>
    <source>
        <strain>cv. Columbia</strain>
    </source>
</reference>
<reference key="6">
    <citation type="journal article" date="2009" name="Mol. Plant">
        <title>Comparative genomic study of the thioredoxin family in photosynthetic organisms with emphasis on Populus trichocarpa.</title>
        <authorList>
            <person name="Chibani K."/>
            <person name="Wingsle G."/>
            <person name="Jacquot J.P."/>
            <person name="Gelhaye E."/>
            <person name="Rouhier N."/>
        </authorList>
    </citation>
    <scope>GENE FAMILY</scope>
    <scope>NOMENCLATURE</scope>
</reference>
<reference key="7">
    <citation type="journal article" date="2009" name="Plant Physiol.">
        <title>A small family of chloroplast atypical thioredoxins.</title>
        <authorList>
            <person name="Dangoor I."/>
            <person name="Peled-Zehavi H."/>
            <person name="Levitan A."/>
            <person name="Pasand O."/>
            <person name="Danon A."/>
        </authorList>
    </citation>
    <scope>FUNCTION</scope>
    <scope>SUBCELLULAR LOCATION</scope>
</reference>
<proteinExistence type="evidence at transcript level"/>
<dbReference type="EMBL" id="AF144387">
    <property type="protein sequence ID" value="AAD35005.1"/>
    <property type="molecule type" value="mRNA"/>
</dbReference>
<dbReference type="EMBL" id="AC003981">
    <property type="protein sequence ID" value="AAF99754.1"/>
    <property type="molecule type" value="Genomic_DNA"/>
</dbReference>
<dbReference type="EMBL" id="CP002684">
    <property type="protein sequence ID" value="AEE28307.1"/>
    <property type="molecule type" value="Genomic_DNA"/>
</dbReference>
<dbReference type="EMBL" id="CP002684">
    <property type="protein sequence ID" value="AEE28309.1"/>
    <property type="molecule type" value="Genomic_DNA"/>
</dbReference>
<dbReference type="EMBL" id="CP002684">
    <property type="protein sequence ID" value="AEE28310.1"/>
    <property type="molecule type" value="Genomic_DNA"/>
</dbReference>
<dbReference type="EMBL" id="AY034938">
    <property type="protein sequence ID" value="AAK59444.1"/>
    <property type="molecule type" value="mRNA"/>
</dbReference>
<dbReference type="EMBL" id="AY063115">
    <property type="protein sequence ID" value="AAL34289.1"/>
    <property type="molecule type" value="mRNA"/>
</dbReference>
<dbReference type="EMBL" id="AK318661">
    <property type="protein sequence ID" value="BAH56776.1"/>
    <property type="molecule type" value="mRNA"/>
</dbReference>
<dbReference type="PIR" id="T00710">
    <property type="entry name" value="T00710"/>
</dbReference>
<dbReference type="RefSeq" id="NP_001117248.1">
    <molecule id="O64654-2"/>
    <property type="nucleotide sequence ID" value="NM_001123776.1"/>
</dbReference>
<dbReference type="RefSeq" id="NP_001117249.1">
    <molecule id="O64654-2"/>
    <property type="nucleotide sequence ID" value="NM_001123777.1"/>
</dbReference>
<dbReference type="RefSeq" id="NP_172333.1">
    <molecule id="O64654-1"/>
    <property type="nucleotide sequence ID" value="NM_100730.4"/>
</dbReference>
<dbReference type="SMR" id="O64654"/>
<dbReference type="FunCoup" id="O64654">
    <property type="interactions" value="136"/>
</dbReference>
<dbReference type="STRING" id="3702.O64654"/>
<dbReference type="PaxDb" id="3702-AT1G08570.1"/>
<dbReference type="EnsemblPlants" id="AT1G08570.1">
    <molecule id="O64654-1"/>
    <property type="protein sequence ID" value="AT1G08570.1"/>
    <property type="gene ID" value="AT1G08570"/>
</dbReference>
<dbReference type="EnsemblPlants" id="AT1G08570.3">
    <molecule id="O64654-2"/>
    <property type="protein sequence ID" value="AT1G08570.3"/>
    <property type="gene ID" value="AT1G08570"/>
</dbReference>
<dbReference type="EnsemblPlants" id="AT1G08570.4">
    <molecule id="O64654-2"/>
    <property type="protein sequence ID" value="AT1G08570.4"/>
    <property type="gene ID" value="AT1G08570"/>
</dbReference>
<dbReference type="Gramene" id="AT1G08570.1">
    <molecule id="O64654-1"/>
    <property type="protein sequence ID" value="AT1G08570.1"/>
    <property type="gene ID" value="AT1G08570"/>
</dbReference>
<dbReference type="Gramene" id="AT1G08570.3">
    <molecule id="O64654-2"/>
    <property type="protein sequence ID" value="AT1G08570.3"/>
    <property type="gene ID" value="AT1G08570"/>
</dbReference>
<dbReference type="Gramene" id="AT1G08570.4">
    <molecule id="O64654-2"/>
    <property type="protein sequence ID" value="AT1G08570.4"/>
    <property type="gene ID" value="AT1G08570"/>
</dbReference>
<dbReference type="KEGG" id="ath:AT1G08570"/>
<dbReference type="Araport" id="AT1G08570"/>
<dbReference type="TAIR" id="AT1G08570">
    <property type="gene designation" value="ACHT4"/>
</dbReference>
<dbReference type="eggNOG" id="KOG0907">
    <property type="taxonomic scope" value="Eukaryota"/>
</dbReference>
<dbReference type="HOGENOM" id="CLU_055041_1_1_1"/>
<dbReference type="InParanoid" id="O64654"/>
<dbReference type="OrthoDB" id="2121326at2759"/>
<dbReference type="PhylomeDB" id="O64654"/>
<dbReference type="PRO" id="PR:O64654"/>
<dbReference type="Proteomes" id="UP000006548">
    <property type="component" value="Chromosome 1"/>
</dbReference>
<dbReference type="ExpressionAtlas" id="O64654">
    <property type="expression patterns" value="baseline and differential"/>
</dbReference>
<dbReference type="GO" id="GO:0009507">
    <property type="term" value="C:chloroplast"/>
    <property type="evidence" value="ECO:0000314"/>
    <property type="project" value="TAIR"/>
</dbReference>
<dbReference type="GO" id="GO:0031969">
    <property type="term" value="C:chloroplast membrane"/>
    <property type="evidence" value="ECO:0000314"/>
    <property type="project" value="TAIR"/>
</dbReference>
<dbReference type="GO" id="GO:0009570">
    <property type="term" value="C:chloroplast stroma"/>
    <property type="evidence" value="ECO:0000314"/>
    <property type="project" value="TAIR"/>
</dbReference>
<dbReference type="GO" id="GO:0016671">
    <property type="term" value="F:oxidoreductase activity, acting on a sulfur group of donors, disulfide as acceptor"/>
    <property type="evidence" value="ECO:0000314"/>
    <property type="project" value="TAIR"/>
</dbReference>
<dbReference type="CDD" id="cd02947">
    <property type="entry name" value="TRX_family"/>
    <property type="match status" value="1"/>
</dbReference>
<dbReference type="FunFam" id="3.40.30.10:FF:000199">
    <property type="entry name" value="Thioredoxin-like 1-2, chloroplastic"/>
    <property type="match status" value="1"/>
</dbReference>
<dbReference type="Gene3D" id="3.40.30.10">
    <property type="entry name" value="Glutaredoxin"/>
    <property type="match status" value="1"/>
</dbReference>
<dbReference type="InterPro" id="IPR036249">
    <property type="entry name" value="Thioredoxin-like_sf"/>
</dbReference>
<dbReference type="InterPro" id="IPR013766">
    <property type="entry name" value="Thioredoxin_domain"/>
</dbReference>
<dbReference type="PANTHER" id="PTHR43601">
    <property type="entry name" value="THIOREDOXIN, MITOCHONDRIAL"/>
    <property type="match status" value="1"/>
</dbReference>
<dbReference type="PANTHER" id="PTHR43601:SF9">
    <property type="entry name" value="THIOREDOXIN-LIKE 1-1, CHLOROPLASTIC"/>
    <property type="match status" value="1"/>
</dbReference>
<dbReference type="Pfam" id="PF00085">
    <property type="entry name" value="Thioredoxin"/>
    <property type="match status" value="1"/>
</dbReference>
<dbReference type="SUPFAM" id="SSF52833">
    <property type="entry name" value="Thioredoxin-like"/>
    <property type="match status" value="1"/>
</dbReference>
<dbReference type="PROSITE" id="PS51352">
    <property type="entry name" value="THIOREDOXIN_2"/>
    <property type="match status" value="1"/>
</dbReference>
<feature type="transit peptide" description="Chloroplast" evidence="1">
    <location>
        <begin position="1"/>
        <end position="72"/>
    </location>
</feature>
<feature type="chain" id="PRO_0000120064" description="Thioredoxin-like 1-1, chloroplastic">
    <location>
        <begin position="73"/>
        <end position="275"/>
    </location>
</feature>
<feature type="domain" description="Thioredoxin" evidence="2">
    <location>
        <begin position="73"/>
        <end position="206"/>
    </location>
</feature>
<feature type="region of interest" description="Disordered" evidence="3">
    <location>
        <begin position="238"/>
        <end position="275"/>
    </location>
</feature>
<feature type="compositionally biased region" description="Low complexity" evidence="3">
    <location>
        <begin position="249"/>
        <end position="264"/>
    </location>
</feature>
<feature type="active site" description="Nucleophile" evidence="1">
    <location>
        <position position="129"/>
    </location>
</feature>
<feature type="active site" description="Nucleophile" evidence="1">
    <location>
        <position position="132"/>
    </location>
</feature>
<feature type="disulfide bond" description="Redox-active" evidence="2">
    <location>
        <begin position="129"/>
        <end position="132"/>
    </location>
</feature>
<feature type="splice variant" id="VSP_039283" description="In isoform 2." evidence="5">
    <location>
        <begin position="1"/>
        <end position="98"/>
    </location>
</feature>
<name>TRL11_ARATH</name>
<keyword id="KW-0025">Alternative splicing</keyword>
<keyword id="KW-0150">Chloroplast</keyword>
<keyword id="KW-1015">Disulfide bond</keyword>
<keyword id="KW-0249">Electron transport</keyword>
<keyword id="KW-0934">Plastid</keyword>
<keyword id="KW-0676">Redox-active center</keyword>
<keyword id="KW-1185">Reference proteome</keyword>
<keyword id="KW-0809">Transit peptide</keyword>
<keyword id="KW-0813">Transport</keyword>
<accession>O64654</accession>
<accession>B3H436</accession>